<evidence type="ECO:0000250" key="1">
    <source>
        <dbReference type="UniProtKB" id="P20263"/>
    </source>
</evidence>
<evidence type="ECO:0000250" key="2">
    <source>
        <dbReference type="UniProtKB" id="Q01860"/>
    </source>
</evidence>
<evidence type="ECO:0000255" key="3">
    <source>
        <dbReference type="PROSITE-ProRule" id="PRU00108"/>
    </source>
</evidence>
<evidence type="ECO:0000255" key="4">
    <source>
        <dbReference type="PROSITE-ProRule" id="PRU00530"/>
    </source>
</evidence>
<evidence type="ECO:0000256" key="5">
    <source>
        <dbReference type="SAM" id="MobiDB-lite"/>
    </source>
</evidence>
<evidence type="ECO:0000305" key="6"/>
<comment type="function">
    <text evidence="2">Transcription factor that binds to the octamer motif (5'-ATTTGCAT-3'). Forms a trimeric complex with SOX2 or SOX15 on DNA and controls the expression of a number of genes involved in embryonic development such as YES1, FGF4, UTF1 and ZFP206. Critical for early embryogenesis and for embryonic stem cell pluripotency (By similarity).</text>
</comment>
<comment type="subunit">
    <text evidence="1 2">Interacts with PKM. Interacts with WWP2. Interacts with UBE2I and ZSCAN10. Interacts with PCGF1. Interacts with ESRRB; recruits ESRRB near the POU5F1-SOX2 element in the NANOG proximal promoter; the interaction is DNA independent. Interacts with ZNF322. Interacts with MAPK8 and MAPK9; the interaction allows MAPK8 and MAPK9 to phosphorylate POU5F1 on Ser-355. Interacts (when phosphorylated on Ser-355) with FBXW8. Interacts with FBXW4. Interacts with SOX2 and SOX15; binds synergistically with either SOX2 or SOX15 to DNA (By similarity). Interacts with DDX56 (By similarity).</text>
</comment>
<comment type="subcellular location">
    <subcellularLocation>
        <location>Cytoplasm</location>
    </subcellularLocation>
    <subcellularLocation>
        <location>Nucleus</location>
    </subcellularLocation>
    <text evidence="1 2">Expressed in a diffuse and slightly punctuate pattern. Colocalizes with MAPK8 and MAPK9 in the nucleus.</text>
</comment>
<comment type="domain">
    <text evidence="2">The POU-specific domain mediates interaction with PKM.</text>
</comment>
<comment type="domain">
    <text evidence="2">The 9aaTAD motif is a transactivation domain present in a large number of yeast and animal transcription factors.</text>
</comment>
<comment type="PTM">
    <text evidence="1">Sumoylation enhances the protein stability, DNA binding and transactivation activity. Sumoylation is required for enhanced YES1 expression.</text>
</comment>
<comment type="PTM">
    <text evidence="1">Ubiquitinated; undergoes 'Lys-63'-linked polyubiquitination by WWP2 leading to proteasomal degradation.</text>
</comment>
<comment type="PTM">
    <text evidence="2">ERK1/2-mediated phosphorylation at Ser-111 promotes nuclear exclusion and proteasomal degradation. Phosphorylation at Thr-235 and Ser-236 decrease DNA-binding and alters ability to activate transcription.</text>
</comment>
<comment type="similarity">
    <text evidence="6">Belongs to the POU transcription factor family. Class-5 subfamily.</text>
</comment>
<reference key="1">
    <citation type="journal article" date="2003" name="Proc. Natl. Acad. Sci. U.S.A.">
        <title>Comparative sequencing of human and chimpanzee MHC class I regions unveils insertions/deletions as the major path to genomic divergence.</title>
        <authorList>
            <person name="Anzai T."/>
            <person name="Shiina T."/>
            <person name="Kimura N."/>
            <person name="Yanagiya K."/>
            <person name="Kohara S."/>
            <person name="Shigenari A."/>
            <person name="Yamagata T."/>
            <person name="Kulski J.K."/>
            <person name="Naruse T.K."/>
            <person name="Fujimori Y."/>
            <person name="Fukuzumi Y."/>
            <person name="Yamazaki M."/>
            <person name="Tashiro H."/>
            <person name="Iwamoto C."/>
            <person name="Umehara Y."/>
            <person name="Imanishi T."/>
            <person name="Meyer A."/>
            <person name="Ikeo K."/>
            <person name="Gojobori T."/>
            <person name="Bahram S."/>
            <person name="Inoko H."/>
        </authorList>
    </citation>
    <scope>NUCLEOTIDE SEQUENCE [LARGE SCALE GENOMIC DNA]</scope>
</reference>
<reference key="2">
    <citation type="journal article" date="2006" name="Genetics">
        <title>Rapid evolution of major histocompatibility complex class I genes in primates generates new disease alleles in humans via hitchhiking diversity.</title>
        <authorList>
            <person name="Shiina T."/>
            <person name="Ota M."/>
            <person name="Shimizu S."/>
            <person name="Katsuyama Y."/>
            <person name="Hashimoto N."/>
            <person name="Takasu M."/>
            <person name="Anzai T."/>
            <person name="Kulski J.K."/>
            <person name="Kikkawa E."/>
            <person name="Naruse T."/>
            <person name="Kimura N."/>
            <person name="Yanagiya K."/>
            <person name="Watanabe A."/>
            <person name="Hosomichi K."/>
            <person name="Kohara S."/>
            <person name="Iwamoto C."/>
            <person name="Umehara Y."/>
            <person name="Meyer A."/>
            <person name="Wanner V."/>
            <person name="Sano K."/>
            <person name="Macquin C."/>
            <person name="Ikeo K."/>
            <person name="Tokunaga K."/>
            <person name="Gojobori T."/>
            <person name="Inoko H."/>
            <person name="Bahram S."/>
        </authorList>
    </citation>
    <scope>NUCLEOTIDE SEQUENCE [LARGE SCALE GENOMIC DNA]</scope>
</reference>
<proteinExistence type="inferred from homology"/>
<gene>
    <name type="primary">POU5F1</name>
    <name type="synonym">OCT3</name>
    <name type="synonym">OTF3</name>
</gene>
<sequence length="360" mass="38601">MAGHLTSDFAFSPPPGGGGDGPGGPEPGWVDPRTWLSFQGPPGGPGIGPGVGPGSEVWGIPPCPPPYEFCGGMAYCGPQVGVGLVPQGGLETSQPEGEAGVGVESNSDGASPEPCTVTPGAVKLEKEKLEQNPEESQDIKALQKELEQFAKLLKQKRITLGYTQADVGLTLGVLFGKVFSQTTICRFEALQLSFKNMCKLRPLLQKWVEEADNNENLQEICKAETLVQARKRKRTSIENRVRGNLENLFLQCPKPTLQQISHIAQQLGLEKDVVRVWFCNRRQKGKRSSSDYAQREDFEAAGSPFSGGPVSFPLAPGPHFGTPGYGSPHFTALYSSVPFPEGEAFPPVSVTTLGSPMHSN</sequence>
<protein>
    <recommendedName>
        <fullName>POU domain, class 5, transcription factor 1</fullName>
    </recommendedName>
    <alternativeName>
        <fullName>Octamer-binding protein 3</fullName>
        <shortName>Oct-3</shortName>
    </alternativeName>
    <alternativeName>
        <fullName>Octamer-binding transcription factor 3</fullName>
        <shortName>OTF-3</shortName>
    </alternativeName>
</protein>
<feature type="chain" id="PRO_0000100750" description="POU domain, class 5, transcription factor 1">
    <location>
        <begin position="1"/>
        <end position="360"/>
    </location>
</feature>
<feature type="domain" description="POU-specific" evidence="4">
    <location>
        <begin position="138"/>
        <end position="212"/>
    </location>
</feature>
<feature type="DNA-binding region" description="Homeobox" evidence="3">
    <location>
        <begin position="230"/>
        <end position="289"/>
    </location>
</feature>
<feature type="region of interest" description="Disordered" evidence="5">
    <location>
        <begin position="1"/>
        <end position="51"/>
    </location>
</feature>
<feature type="region of interest" description="Disordered" evidence="5">
    <location>
        <begin position="88"/>
        <end position="114"/>
    </location>
</feature>
<feature type="region of interest" description="DNA-binding" evidence="1">
    <location>
        <begin position="180"/>
        <end position="186"/>
    </location>
</feature>
<feature type="region of interest" description="DNA-binding" evidence="1">
    <location>
        <begin position="193"/>
        <end position="196"/>
    </location>
</feature>
<feature type="short sequence motif" description="9aaTAD" evidence="2">
    <location>
        <begin position="4"/>
        <end position="12"/>
    </location>
</feature>
<feature type="binding site" evidence="1">
    <location>
        <position position="157"/>
    </location>
    <ligand>
        <name>DNA</name>
        <dbReference type="ChEBI" id="CHEBI:16991"/>
    </ligand>
</feature>
<feature type="binding site" evidence="1">
    <location>
        <position position="164"/>
    </location>
    <ligand>
        <name>DNA</name>
        <dbReference type="ChEBI" id="CHEBI:16991"/>
    </ligand>
</feature>
<feature type="modified residue" description="Phosphoserine; by MAPK" evidence="2">
    <location>
        <position position="111"/>
    </location>
</feature>
<feature type="modified residue" description="Phosphothreonine" evidence="2">
    <location>
        <position position="235"/>
    </location>
</feature>
<feature type="modified residue" description="Phosphoserine" evidence="2">
    <location>
        <position position="236"/>
    </location>
</feature>
<feature type="modified residue" description="Phosphoserine" evidence="2">
    <location>
        <position position="289"/>
    </location>
</feature>
<feature type="modified residue" description="Phosphoserine" evidence="2">
    <location>
        <position position="290"/>
    </location>
</feature>
<feature type="modified residue" description="Phosphoserine" evidence="1">
    <location>
        <position position="355"/>
    </location>
</feature>
<feature type="cross-link" description="Glycyl lysine isopeptide (Lys-Gly) (interchain with G-Cter in SUMO)" evidence="1">
    <location>
        <position position="123"/>
    </location>
</feature>
<feature type="sequence conflict" description="In Ref. 2; BAE92816/BAE92818." evidence="6" ref="2">
    <original>T</original>
    <variation>A</variation>
    <location>
        <position position="6"/>
    </location>
</feature>
<name>PO5F1_PANTR</name>
<dbReference type="EMBL" id="BA000041">
    <property type="protein sequence ID" value="BAC78165.1"/>
    <property type="molecule type" value="Genomic_DNA"/>
</dbReference>
<dbReference type="EMBL" id="AB210197">
    <property type="protein sequence ID" value="BAE92816.1"/>
    <property type="molecule type" value="Genomic_DNA"/>
</dbReference>
<dbReference type="EMBL" id="AB210198">
    <property type="protein sequence ID" value="BAE92818.1"/>
    <property type="molecule type" value="Genomic_DNA"/>
</dbReference>
<dbReference type="RefSeq" id="NP_001238970.1">
    <property type="nucleotide sequence ID" value="NM_001252041.1"/>
</dbReference>
<dbReference type="SMR" id="Q7YR49"/>
<dbReference type="STRING" id="9598.ENSPTRP00000030631"/>
<dbReference type="PaxDb" id="9598-ENSPTRP00000030631"/>
<dbReference type="GeneID" id="744263"/>
<dbReference type="KEGG" id="ptr:744263"/>
<dbReference type="CTD" id="5460"/>
<dbReference type="eggNOG" id="KOG3802">
    <property type="taxonomic scope" value="Eukaryota"/>
</dbReference>
<dbReference type="InParanoid" id="Q7YR49"/>
<dbReference type="OrthoDB" id="11680at9604"/>
<dbReference type="TreeFam" id="TF316413"/>
<dbReference type="Proteomes" id="UP000002277">
    <property type="component" value="Unplaced"/>
</dbReference>
<dbReference type="GO" id="GO:0005737">
    <property type="term" value="C:cytoplasm"/>
    <property type="evidence" value="ECO:0007669"/>
    <property type="project" value="UniProtKB-SubCell"/>
</dbReference>
<dbReference type="GO" id="GO:0005634">
    <property type="term" value="C:nucleus"/>
    <property type="evidence" value="ECO:0007669"/>
    <property type="project" value="UniProtKB-SubCell"/>
</dbReference>
<dbReference type="GO" id="GO:0000981">
    <property type="term" value="F:DNA-binding transcription factor activity, RNA polymerase II-specific"/>
    <property type="evidence" value="ECO:0000318"/>
    <property type="project" value="GO_Central"/>
</dbReference>
<dbReference type="GO" id="GO:0000978">
    <property type="term" value="F:RNA polymerase II cis-regulatory region sequence-specific DNA binding"/>
    <property type="evidence" value="ECO:0000318"/>
    <property type="project" value="GO_Central"/>
</dbReference>
<dbReference type="GO" id="GO:0006357">
    <property type="term" value="P:regulation of transcription by RNA polymerase II"/>
    <property type="evidence" value="ECO:0000318"/>
    <property type="project" value="GO_Central"/>
</dbReference>
<dbReference type="CDD" id="cd00086">
    <property type="entry name" value="homeodomain"/>
    <property type="match status" value="1"/>
</dbReference>
<dbReference type="FunFam" id="1.10.10.60:FF:000161">
    <property type="entry name" value="POU domain protein"/>
    <property type="match status" value="1"/>
</dbReference>
<dbReference type="FunFam" id="1.10.260.40:FF:000022">
    <property type="entry name" value="POU domain protein"/>
    <property type="match status" value="1"/>
</dbReference>
<dbReference type="Gene3D" id="1.10.10.60">
    <property type="entry name" value="Homeodomain-like"/>
    <property type="match status" value="1"/>
</dbReference>
<dbReference type="Gene3D" id="1.10.260.40">
    <property type="entry name" value="lambda repressor-like DNA-binding domains"/>
    <property type="match status" value="1"/>
</dbReference>
<dbReference type="InterPro" id="IPR001356">
    <property type="entry name" value="HD"/>
</dbReference>
<dbReference type="InterPro" id="IPR017970">
    <property type="entry name" value="Homeobox_CS"/>
</dbReference>
<dbReference type="InterPro" id="IPR009057">
    <property type="entry name" value="Homeodomain-like_sf"/>
</dbReference>
<dbReference type="InterPro" id="IPR010982">
    <property type="entry name" value="Lambda_DNA-bd_dom_sf"/>
</dbReference>
<dbReference type="InterPro" id="IPR013847">
    <property type="entry name" value="POU"/>
</dbReference>
<dbReference type="InterPro" id="IPR000327">
    <property type="entry name" value="POU_dom"/>
</dbReference>
<dbReference type="InterPro" id="IPR050255">
    <property type="entry name" value="POU_domain_TF"/>
</dbReference>
<dbReference type="PANTHER" id="PTHR11636">
    <property type="entry name" value="POU DOMAIN"/>
    <property type="match status" value="1"/>
</dbReference>
<dbReference type="PANTHER" id="PTHR11636:SF86">
    <property type="entry name" value="POU DOMAIN, CLASS 5, TRANSCRIPTION FACTOR 1-RELATED"/>
    <property type="match status" value="1"/>
</dbReference>
<dbReference type="Pfam" id="PF00046">
    <property type="entry name" value="Homeodomain"/>
    <property type="match status" value="1"/>
</dbReference>
<dbReference type="Pfam" id="PF00157">
    <property type="entry name" value="Pou"/>
    <property type="match status" value="1"/>
</dbReference>
<dbReference type="PRINTS" id="PR00028">
    <property type="entry name" value="POUDOMAIN"/>
</dbReference>
<dbReference type="SMART" id="SM00389">
    <property type="entry name" value="HOX"/>
    <property type="match status" value="1"/>
</dbReference>
<dbReference type="SMART" id="SM00352">
    <property type="entry name" value="POU"/>
    <property type="match status" value="1"/>
</dbReference>
<dbReference type="SUPFAM" id="SSF46689">
    <property type="entry name" value="Homeodomain-like"/>
    <property type="match status" value="1"/>
</dbReference>
<dbReference type="SUPFAM" id="SSF47413">
    <property type="entry name" value="lambda repressor-like DNA-binding domains"/>
    <property type="match status" value="1"/>
</dbReference>
<dbReference type="PROSITE" id="PS00027">
    <property type="entry name" value="HOMEOBOX_1"/>
    <property type="match status" value="1"/>
</dbReference>
<dbReference type="PROSITE" id="PS50071">
    <property type="entry name" value="HOMEOBOX_2"/>
    <property type="match status" value="1"/>
</dbReference>
<dbReference type="PROSITE" id="PS00035">
    <property type="entry name" value="POU_1"/>
    <property type="match status" value="1"/>
</dbReference>
<dbReference type="PROSITE" id="PS00465">
    <property type="entry name" value="POU_2"/>
    <property type="match status" value="1"/>
</dbReference>
<dbReference type="PROSITE" id="PS51179">
    <property type="entry name" value="POU_3"/>
    <property type="match status" value="1"/>
</dbReference>
<accession>Q7YR49</accession>
<accession>Q1XHV2</accession>
<organism>
    <name type="scientific">Pan troglodytes</name>
    <name type="common">Chimpanzee</name>
    <dbReference type="NCBI Taxonomy" id="9598"/>
    <lineage>
        <taxon>Eukaryota</taxon>
        <taxon>Metazoa</taxon>
        <taxon>Chordata</taxon>
        <taxon>Craniata</taxon>
        <taxon>Vertebrata</taxon>
        <taxon>Euteleostomi</taxon>
        <taxon>Mammalia</taxon>
        <taxon>Eutheria</taxon>
        <taxon>Euarchontoglires</taxon>
        <taxon>Primates</taxon>
        <taxon>Haplorrhini</taxon>
        <taxon>Catarrhini</taxon>
        <taxon>Hominidae</taxon>
        <taxon>Pan</taxon>
    </lineage>
</organism>
<keyword id="KW-0963">Cytoplasm</keyword>
<keyword id="KW-0217">Developmental protein</keyword>
<keyword id="KW-0238">DNA-binding</keyword>
<keyword id="KW-0371">Homeobox</keyword>
<keyword id="KW-1017">Isopeptide bond</keyword>
<keyword id="KW-0539">Nucleus</keyword>
<keyword id="KW-0597">Phosphoprotein</keyword>
<keyword id="KW-1185">Reference proteome</keyword>
<keyword id="KW-0804">Transcription</keyword>
<keyword id="KW-0805">Transcription regulation</keyword>
<keyword id="KW-0832">Ubl conjugation</keyword>